<feature type="chain" id="PRO_1000003835" description="Nucleoid-associated protein SSP2277">
    <location>
        <begin position="1"/>
        <end position="105"/>
    </location>
</feature>
<feature type="region of interest" description="Disordered" evidence="2">
    <location>
        <begin position="1"/>
        <end position="41"/>
    </location>
</feature>
<feature type="compositionally biased region" description="Low complexity" evidence="2">
    <location>
        <begin position="7"/>
        <end position="16"/>
    </location>
</feature>
<feature type="compositionally biased region" description="Basic and acidic residues" evidence="2">
    <location>
        <begin position="20"/>
        <end position="33"/>
    </location>
</feature>
<organism>
    <name type="scientific">Staphylococcus saprophyticus subsp. saprophyticus (strain ATCC 15305 / DSM 20229 / NCIMB 8711 / NCTC 7292 / S-41)</name>
    <dbReference type="NCBI Taxonomy" id="342451"/>
    <lineage>
        <taxon>Bacteria</taxon>
        <taxon>Bacillati</taxon>
        <taxon>Bacillota</taxon>
        <taxon>Bacilli</taxon>
        <taxon>Bacillales</taxon>
        <taxon>Staphylococcaceae</taxon>
        <taxon>Staphylococcus</taxon>
    </lineage>
</organism>
<proteinExistence type="inferred from homology"/>
<keyword id="KW-0963">Cytoplasm</keyword>
<keyword id="KW-0238">DNA-binding</keyword>
<keyword id="KW-1185">Reference proteome</keyword>
<accession>Q49UY8</accession>
<comment type="function">
    <text evidence="1">Binds to DNA and alters its conformation. May be involved in regulation of gene expression, nucleoid organization and DNA protection.</text>
</comment>
<comment type="subunit">
    <text evidence="1">Homodimer.</text>
</comment>
<comment type="subcellular location">
    <subcellularLocation>
        <location evidence="1">Cytoplasm</location>
        <location evidence="1">Nucleoid</location>
    </subcellularLocation>
</comment>
<comment type="similarity">
    <text evidence="1">Belongs to the YbaB/EbfC family.</text>
</comment>
<reference key="1">
    <citation type="journal article" date="2005" name="Proc. Natl. Acad. Sci. U.S.A.">
        <title>Whole genome sequence of Staphylococcus saprophyticus reveals the pathogenesis of uncomplicated urinary tract infection.</title>
        <authorList>
            <person name="Kuroda M."/>
            <person name="Yamashita A."/>
            <person name="Hirakawa H."/>
            <person name="Kumano M."/>
            <person name="Morikawa K."/>
            <person name="Higashide M."/>
            <person name="Maruyama A."/>
            <person name="Inose Y."/>
            <person name="Matoba K."/>
            <person name="Toh H."/>
            <person name="Kuhara S."/>
            <person name="Hattori M."/>
            <person name="Ohta T."/>
        </authorList>
    </citation>
    <scope>NUCLEOTIDE SEQUENCE [LARGE SCALE GENOMIC DNA]</scope>
    <source>
        <strain>ATCC 15305 / DSM 20229 / NCIMB 8711 / NCTC 7292 / S-41</strain>
    </source>
</reference>
<sequence length="105" mass="11601">MRGGGNMQQMMKQMQKMQKKMGEEQEKLKEEKVQGTAGGGMVTVTVSGHKEVLDVEIKEEAVDPDDIEMLQDLVIAATNEAMNKADELTQERLGKHTQGLNIPGM</sequence>
<name>Y2277_STAS1</name>
<gene>
    <name type="ordered locus">SSP2277</name>
</gene>
<protein>
    <recommendedName>
        <fullName evidence="1">Nucleoid-associated protein SSP2277</fullName>
    </recommendedName>
</protein>
<evidence type="ECO:0000255" key="1">
    <source>
        <dbReference type="HAMAP-Rule" id="MF_00274"/>
    </source>
</evidence>
<evidence type="ECO:0000256" key="2">
    <source>
        <dbReference type="SAM" id="MobiDB-lite"/>
    </source>
</evidence>
<dbReference type="EMBL" id="AP008934">
    <property type="protein sequence ID" value="BAE19422.1"/>
    <property type="molecule type" value="Genomic_DNA"/>
</dbReference>
<dbReference type="RefSeq" id="WP_002484224.1">
    <property type="nucleotide sequence ID" value="NZ_MTGA01000035.1"/>
</dbReference>
<dbReference type="SMR" id="Q49UY8"/>
<dbReference type="KEGG" id="ssp:SSP2277"/>
<dbReference type="eggNOG" id="COG0718">
    <property type="taxonomic scope" value="Bacteria"/>
</dbReference>
<dbReference type="HOGENOM" id="CLU_140930_1_0_9"/>
<dbReference type="OrthoDB" id="9795263at2"/>
<dbReference type="Proteomes" id="UP000006371">
    <property type="component" value="Chromosome"/>
</dbReference>
<dbReference type="GO" id="GO:0043590">
    <property type="term" value="C:bacterial nucleoid"/>
    <property type="evidence" value="ECO:0007669"/>
    <property type="project" value="UniProtKB-UniRule"/>
</dbReference>
<dbReference type="GO" id="GO:0005829">
    <property type="term" value="C:cytosol"/>
    <property type="evidence" value="ECO:0007669"/>
    <property type="project" value="TreeGrafter"/>
</dbReference>
<dbReference type="GO" id="GO:0003677">
    <property type="term" value="F:DNA binding"/>
    <property type="evidence" value="ECO:0007669"/>
    <property type="project" value="UniProtKB-UniRule"/>
</dbReference>
<dbReference type="FunFam" id="3.30.1310.10:FF:000002">
    <property type="entry name" value="Nucleoid-associated protein IKC_06587"/>
    <property type="match status" value="1"/>
</dbReference>
<dbReference type="Gene3D" id="3.30.1310.10">
    <property type="entry name" value="Nucleoid-associated protein YbaB-like domain"/>
    <property type="match status" value="1"/>
</dbReference>
<dbReference type="HAMAP" id="MF_00274">
    <property type="entry name" value="DNA_YbaB_EbfC"/>
    <property type="match status" value="1"/>
</dbReference>
<dbReference type="InterPro" id="IPR036894">
    <property type="entry name" value="YbaB-like_sf"/>
</dbReference>
<dbReference type="InterPro" id="IPR004401">
    <property type="entry name" value="YbaB/EbfC"/>
</dbReference>
<dbReference type="NCBIfam" id="TIGR00103">
    <property type="entry name" value="DNA_YbaB_EbfC"/>
    <property type="match status" value="1"/>
</dbReference>
<dbReference type="PANTHER" id="PTHR33449">
    <property type="entry name" value="NUCLEOID-ASSOCIATED PROTEIN YBAB"/>
    <property type="match status" value="1"/>
</dbReference>
<dbReference type="PANTHER" id="PTHR33449:SF1">
    <property type="entry name" value="NUCLEOID-ASSOCIATED PROTEIN YBAB"/>
    <property type="match status" value="1"/>
</dbReference>
<dbReference type="Pfam" id="PF02575">
    <property type="entry name" value="YbaB_DNA_bd"/>
    <property type="match status" value="1"/>
</dbReference>
<dbReference type="PIRSF" id="PIRSF004555">
    <property type="entry name" value="UCP004555"/>
    <property type="match status" value="1"/>
</dbReference>
<dbReference type="SUPFAM" id="SSF82607">
    <property type="entry name" value="YbaB-like"/>
    <property type="match status" value="1"/>
</dbReference>